<name>UVRA_SHIFL</name>
<dbReference type="EMBL" id="AE005674">
    <property type="protein sequence ID" value="AAN45568.1"/>
    <property type="molecule type" value="Genomic_DNA"/>
</dbReference>
<dbReference type="EMBL" id="AE014073">
    <property type="protein sequence ID" value="AAP18629.1"/>
    <property type="molecule type" value="Genomic_DNA"/>
</dbReference>
<dbReference type="RefSeq" id="NP_709861.1">
    <property type="nucleotide sequence ID" value="NC_004337.2"/>
</dbReference>
<dbReference type="RefSeq" id="WP_000357740.1">
    <property type="nucleotide sequence ID" value="NZ_WPGW01000193.1"/>
</dbReference>
<dbReference type="SMR" id="P0A699"/>
<dbReference type="STRING" id="198214.SF4146"/>
<dbReference type="PaxDb" id="198214-SF4146"/>
<dbReference type="GeneID" id="1027393"/>
<dbReference type="GeneID" id="93777773"/>
<dbReference type="KEGG" id="sfl:SF4146"/>
<dbReference type="KEGG" id="sfx:S3583"/>
<dbReference type="PATRIC" id="fig|198214.7.peg.4893"/>
<dbReference type="HOGENOM" id="CLU_001370_0_2_6"/>
<dbReference type="Proteomes" id="UP000001006">
    <property type="component" value="Chromosome"/>
</dbReference>
<dbReference type="Proteomes" id="UP000002673">
    <property type="component" value="Chromosome"/>
</dbReference>
<dbReference type="GO" id="GO:0005737">
    <property type="term" value="C:cytoplasm"/>
    <property type="evidence" value="ECO:0007669"/>
    <property type="project" value="UniProtKB-SubCell"/>
</dbReference>
<dbReference type="GO" id="GO:0009380">
    <property type="term" value="C:excinuclease repair complex"/>
    <property type="evidence" value="ECO:0007669"/>
    <property type="project" value="InterPro"/>
</dbReference>
<dbReference type="GO" id="GO:0005524">
    <property type="term" value="F:ATP binding"/>
    <property type="evidence" value="ECO:0007669"/>
    <property type="project" value="UniProtKB-UniRule"/>
</dbReference>
<dbReference type="GO" id="GO:0016887">
    <property type="term" value="F:ATP hydrolysis activity"/>
    <property type="evidence" value="ECO:0007669"/>
    <property type="project" value="InterPro"/>
</dbReference>
<dbReference type="GO" id="GO:0003677">
    <property type="term" value="F:DNA binding"/>
    <property type="evidence" value="ECO:0007669"/>
    <property type="project" value="UniProtKB-UniRule"/>
</dbReference>
<dbReference type="GO" id="GO:0009381">
    <property type="term" value="F:excinuclease ABC activity"/>
    <property type="evidence" value="ECO:0007669"/>
    <property type="project" value="UniProtKB-UniRule"/>
</dbReference>
<dbReference type="GO" id="GO:0008270">
    <property type="term" value="F:zinc ion binding"/>
    <property type="evidence" value="ECO:0007669"/>
    <property type="project" value="UniProtKB-UniRule"/>
</dbReference>
<dbReference type="GO" id="GO:0006289">
    <property type="term" value="P:nucleotide-excision repair"/>
    <property type="evidence" value="ECO:0007669"/>
    <property type="project" value="UniProtKB-UniRule"/>
</dbReference>
<dbReference type="GO" id="GO:0009432">
    <property type="term" value="P:SOS response"/>
    <property type="evidence" value="ECO:0007669"/>
    <property type="project" value="UniProtKB-UniRule"/>
</dbReference>
<dbReference type="CDD" id="cd03270">
    <property type="entry name" value="ABC_UvrA_I"/>
    <property type="match status" value="1"/>
</dbReference>
<dbReference type="CDD" id="cd03271">
    <property type="entry name" value="ABC_UvrA_II"/>
    <property type="match status" value="1"/>
</dbReference>
<dbReference type="FunFam" id="1.10.8.280:FF:000001">
    <property type="entry name" value="UvrABC system protein A"/>
    <property type="match status" value="1"/>
</dbReference>
<dbReference type="FunFam" id="1.20.1580.10:FF:000002">
    <property type="entry name" value="UvrABC system protein A"/>
    <property type="match status" value="1"/>
</dbReference>
<dbReference type="FunFam" id="1.20.1580.10:FF:000003">
    <property type="entry name" value="UvrABC system protein A"/>
    <property type="match status" value="1"/>
</dbReference>
<dbReference type="Gene3D" id="1.10.8.280">
    <property type="entry name" value="ABC transporter ATPase domain-like"/>
    <property type="match status" value="1"/>
</dbReference>
<dbReference type="Gene3D" id="1.20.1580.10">
    <property type="entry name" value="ABC transporter ATPase like domain"/>
    <property type="match status" value="2"/>
</dbReference>
<dbReference type="Gene3D" id="3.30.1490.20">
    <property type="entry name" value="ATP-grasp fold, A domain"/>
    <property type="match status" value="1"/>
</dbReference>
<dbReference type="Gene3D" id="3.40.50.300">
    <property type="entry name" value="P-loop containing nucleotide triphosphate hydrolases"/>
    <property type="match status" value="2"/>
</dbReference>
<dbReference type="HAMAP" id="MF_00205">
    <property type="entry name" value="UvrA"/>
    <property type="match status" value="1"/>
</dbReference>
<dbReference type="InterPro" id="IPR003439">
    <property type="entry name" value="ABC_transporter-like_ATP-bd"/>
</dbReference>
<dbReference type="InterPro" id="IPR017871">
    <property type="entry name" value="ABC_transporter-like_CS"/>
</dbReference>
<dbReference type="InterPro" id="IPR013815">
    <property type="entry name" value="ATP_grasp_subdomain_1"/>
</dbReference>
<dbReference type="InterPro" id="IPR027417">
    <property type="entry name" value="P-loop_NTPase"/>
</dbReference>
<dbReference type="InterPro" id="IPR004602">
    <property type="entry name" value="UvrA"/>
</dbReference>
<dbReference type="InterPro" id="IPR041552">
    <property type="entry name" value="UvrA_DNA-bd"/>
</dbReference>
<dbReference type="InterPro" id="IPR041102">
    <property type="entry name" value="UvrA_inter"/>
</dbReference>
<dbReference type="NCBIfam" id="NF001503">
    <property type="entry name" value="PRK00349.1"/>
    <property type="match status" value="1"/>
</dbReference>
<dbReference type="NCBIfam" id="TIGR00630">
    <property type="entry name" value="uvra"/>
    <property type="match status" value="1"/>
</dbReference>
<dbReference type="PANTHER" id="PTHR43152">
    <property type="entry name" value="UVRABC SYSTEM PROTEIN A"/>
    <property type="match status" value="1"/>
</dbReference>
<dbReference type="PANTHER" id="PTHR43152:SF3">
    <property type="entry name" value="UVRABC SYSTEM PROTEIN A"/>
    <property type="match status" value="1"/>
</dbReference>
<dbReference type="Pfam" id="PF00005">
    <property type="entry name" value="ABC_tran"/>
    <property type="match status" value="1"/>
</dbReference>
<dbReference type="Pfam" id="PF17755">
    <property type="entry name" value="UvrA_DNA-bind"/>
    <property type="match status" value="1"/>
</dbReference>
<dbReference type="Pfam" id="PF17760">
    <property type="entry name" value="UvrA_inter"/>
    <property type="match status" value="1"/>
</dbReference>
<dbReference type="SUPFAM" id="SSF52540">
    <property type="entry name" value="P-loop containing nucleoside triphosphate hydrolases"/>
    <property type="match status" value="2"/>
</dbReference>
<dbReference type="PROSITE" id="PS00211">
    <property type="entry name" value="ABC_TRANSPORTER_1"/>
    <property type="match status" value="2"/>
</dbReference>
<dbReference type="PROSITE" id="PS50893">
    <property type="entry name" value="ABC_TRANSPORTER_2"/>
    <property type="match status" value="1"/>
</dbReference>
<feature type="chain" id="PRO_0000093088" description="UvrABC system protein A">
    <location>
        <begin position="1"/>
        <end position="940"/>
    </location>
</feature>
<feature type="domain" description="ABC transporter 1" evidence="2">
    <location>
        <begin position="310"/>
        <end position="587"/>
    </location>
</feature>
<feature type="domain" description="ABC transporter 2" evidence="2">
    <location>
        <begin position="607"/>
        <end position="937"/>
    </location>
</feature>
<feature type="zinc finger region" description="C4-type" evidence="2">
    <location>
        <begin position="253"/>
        <end position="280"/>
    </location>
</feature>
<feature type="zinc finger region" description="C4-type" evidence="2">
    <location>
        <begin position="740"/>
        <end position="766"/>
    </location>
</feature>
<feature type="binding site" evidence="2">
    <location>
        <begin position="31"/>
        <end position="38"/>
    </location>
    <ligand>
        <name>ATP</name>
        <dbReference type="ChEBI" id="CHEBI:30616"/>
    </ligand>
</feature>
<feature type="binding site" evidence="2">
    <location>
        <begin position="640"/>
        <end position="647"/>
    </location>
    <ligand>
        <name>ATP</name>
        <dbReference type="ChEBI" id="CHEBI:30616"/>
    </ligand>
</feature>
<organism>
    <name type="scientific">Shigella flexneri</name>
    <dbReference type="NCBI Taxonomy" id="623"/>
    <lineage>
        <taxon>Bacteria</taxon>
        <taxon>Pseudomonadati</taxon>
        <taxon>Pseudomonadota</taxon>
        <taxon>Gammaproteobacteria</taxon>
        <taxon>Enterobacterales</taxon>
        <taxon>Enterobacteriaceae</taxon>
        <taxon>Shigella</taxon>
    </lineage>
</organism>
<protein>
    <recommendedName>
        <fullName evidence="2">UvrABC system protein A</fullName>
        <shortName evidence="2">UvrA protein</shortName>
    </recommendedName>
    <alternativeName>
        <fullName evidence="2">Excinuclease ABC subunit A</fullName>
    </alternativeName>
</protein>
<comment type="function">
    <text evidence="2">The UvrABC repair system catalyzes the recognition and processing of DNA lesions. UvrA is an ATPase and a DNA-binding protein. A damage recognition complex composed of 2 UvrA and 2 UvrB subunits scans DNA for abnormalities. When the presence of a lesion has been verified by UvrB, the UvrA molecules dissociate.</text>
</comment>
<comment type="subunit">
    <text evidence="2">Forms a heterotetramer with UvrB during the search for lesions.</text>
</comment>
<comment type="subcellular location">
    <subcellularLocation>
        <location evidence="2">Cytoplasm</location>
    </subcellularLocation>
</comment>
<comment type="miscellaneous">
    <text evidence="1">Binds about 2 zinc atoms/molecule.</text>
</comment>
<comment type="similarity">
    <text evidence="2">Belongs to the ABC transporter superfamily. UvrA family.</text>
</comment>
<reference key="1">
    <citation type="journal article" date="2002" name="Nucleic Acids Res.">
        <title>Genome sequence of Shigella flexneri 2a: insights into pathogenicity through comparison with genomes of Escherichia coli K12 and O157.</title>
        <authorList>
            <person name="Jin Q."/>
            <person name="Yuan Z."/>
            <person name="Xu J."/>
            <person name="Wang Y."/>
            <person name="Shen Y."/>
            <person name="Lu W."/>
            <person name="Wang J."/>
            <person name="Liu H."/>
            <person name="Yang J."/>
            <person name="Yang F."/>
            <person name="Zhang X."/>
            <person name="Zhang J."/>
            <person name="Yang G."/>
            <person name="Wu H."/>
            <person name="Qu D."/>
            <person name="Dong J."/>
            <person name="Sun L."/>
            <person name="Xue Y."/>
            <person name="Zhao A."/>
            <person name="Gao Y."/>
            <person name="Zhu J."/>
            <person name="Kan B."/>
            <person name="Ding K."/>
            <person name="Chen S."/>
            <person name="Cheng H."/>
            <person name="Yao Z."/>
            <person name="He B."/>
            <person name="Chen R."/>
            <person name="Ma D."/>
            <person name="Qiang B."/>
            <person name="Wen Y."/>
            <person name="Hou Y."/>
            <person name="Yu J."/>
        </authorList>
    </citation>
    <scope>NUCLEOTIDE SEQUENCE [LARGE SCALE GENOMIC DNA]</scope>
    <source>
        <strain>301 / Serotype 2a</strain>
    </source>
</reference>
<reference key="2">
    <citation type="journal article" date="2003" name="Infect. Immun.">
        <title>Complete genome sequence and comparative genomics of Shigella flexneri serotype 2a strain 2457T.</title>
        <authorList>
            <person name="Wei J."/>
            <person name="Goldberg M.B."/>
            <person name="Burland V."/>
            <person name="Venkatesan M.M."/>
            <person name="Deng W."/>
            <person name="Fournier G."/>
            <person name="Mayhew G.F."/>
            <person name="Plunkett G. III"/>
            <person name="Rose D.J."/>
            <person name="Darling A."/>
            <person name="Mau B."/>
            <person name="Perna N.T."/>
            <person name="Payne S.M."/>
            <person name="Runyen-Janecky L.J."/>
            <person name="Zhou S."/>
            <person name="Schwartz D.C."/>
            <person name="Blattner F.R."/>
        </authorList>
    </citation>
    <scope>NUCLEOTIDE SEQUENCE [LARGE SCALE GENOMIC DNA]</scope>
    <source>
        <strain>ATCC 700930 / 2457T / Serotype 2a</strain>
    </source>
</reference>
<accession>P0A699</accession>
<accession>P07671</accession>
<accession>P76788</accession>
<gene>
    <name evidence="2" type="primary">uvrA</name>
    <name type="synonym">dinE</name>
    <name type="ordered locus">SF4146</name>
    <name type="ordered locus">S3583</name>
</gene>
<sequence>MDKIEVRGARTHNLKNINLVIPRDKLIVVTGLSGSGKSSLAFDTLYAEGQRRYVESLSAYARQFLSLMEKPDVDHIEGLSPAISIEQKSTSHNPRSTVGTITEIHDYLRLLFARVGEPRCPDHDVPLAAQTVSQMVDNVLSQPEGKRLMLLAPIIKERKGEHTKTLENLASQGYIRARIDGEVCDLSDPPKLELQKKHTIEVVVDRFKVRDDLTQRLAESFETALELSGGTAVVADMDDPKAEELLFSANFACPICGYSMRELEPRLFSFNNPAGACPTCDGLGVQQYFDPDRVIQNPELSLAGGAIRGWDRRNFYYFQMLKSLADHYKFDVEAPWGSLSANVHKVVLYGSGKENIEFKYMNDRGDTSIRRHPFEGVLHNMERRYKETESSAVREELAKFISNRPCASCEGTRLRREARHVYVENTPLPAISDMSIGHAMEFFNNLKLAGQRAKIAEKILKEIGDRLKFLVNVGLNYLTLSRSAETLSGGEAQRIRLASQIGAGLVGVMYVLDEPSIGLHQRDNERLLGTLIHLRDLGNTVIVVEHDEDAIRAADHVIDIGPGAGVHGGEVVAEGPLEAIMAVPESLTGQYMSGKRKIEVPKKRVPANPEKVLKLTGARGNNLKDVTLTLPVGLFTCITGVSGSGKSTLINDTLFPIAQRQLNGATIAEPAPYRDIQGLEHFDKVIDIDQSPIGRTPRSNPATYTGVFTPVRELFAGVPESRARGYTPGRFSFNVRGGRCEACQGDGVIKVEMHFLPDIYVPCDQCKGKRYNRETLEIKYKGKTIHEVLDMTIEEAREFFDAVPALARKLQTLMDVGLTYIRLGQSATTLSGGEAQRVKLARELSKRGTGQTLYILDEPTTGLHFADIQQLLDVLHKLRDQGNTIVVIEHNLDVIKTADWIVDLGPEGGSGGGEILVSGTPETVAECEASHTARFLKPML</sequence>
<evidence type="ECO:0000250" key="1"/>
<evidence type="ECO:0000255" key="2">
    <source>
        <dbReference type="HAMAP-Rule" id="MF_00205"/>
    </source>
</evidence>
<proteinExistence type="inferred from homology"/>
<keyword id="KW-0067">ATP-binding</keyword>
<keyword id="KW-0963">Cytoplasm</keyword>
<keyword id="KW-0227">DNA damage</keyword>
<keyword id="KW-0228">DNA excision</keyword>
<keyword id="KW-0234">DNA repair</keyword>
<keyword id="KW-0238">DNA-binding</keyword>
<keyword id="KW-0267">Excision nuclease</keyword>
<keyword id="KW-0479">Metal-binding</keyword>
<keyword id="KW-0547">Nucleotide-binding</keyword>
<keyword id="KW-1185">Reference proteome</keyword>
<keyword id="KW-0677">Repeat</keyword>
<keyword id="KW-0742">SOS response</keyword>
<keyword id="KW-0862">Zinc</keyword>
<keyword id="KW-0863">Zinc-finger</keyword>